<feature type="chain" id="PRO_0000195354" description="Glucose-1-phosphate adenylyltransferase small subunit">
    <location>
        <begin position="1" status="less than"/>
        <end position="125"/>
    </location>
</feature>
<feature type="non-terminal residue">
    <location>
        <position position="1"/>
    </location>
</feature>
<organism>
    <name type="scientific">Zea mays</name>
    <name type="common">Maize</name>
    <dbReference type="NCBI Taxonomy" id="4577"/>
    <lineage>
        <taxon>Eukaryota</taxon>
        <taxon>Viridiplantae</taxon>
        <taxon>Streptophyta</taxon>
        <taxon>Embryophyta</taxon>
        <taxon>Tracheophyta</taxon>
        <taxon>Spermatophyta</taxon>
        <taxon>Magnoliopsida</taxon>
        <taxon>Liliopsida</taxon>
        <taxon>Poales</taxon>
        <taxon>Poaceae</taxon>
        <taxon>PACMAD clade</taxon>
        <taxon>Panicoideae</taxon>
        <taxon>Andropogonodae</taxon>
        <taxon>Andropogoneae</taxon>
        <taxon>Tripsacinae</taxon>
        <taxon>Zea</taxon>
    </lineage>
</organism>
<proteinExistence type="evidence at transcript level"/>
<gene>
    <name type="primary">GLG1</name>
</gene>
<accession>P55240</accession>
<dbReference type="EC" id="2.7.7.27"/>
<dbReference type="EMBL" id="S72425">
    <property type="protein sequence ID" value="AAB29961.1"/>
    <property type="molecule type" value="mRNA"/>
</dbReference>
<dbReference type="PIR" id="T01750">
    <property type="entry name" value="T01750"/>
</dbReference>
<dbReference type="SMR" id="P55240"/>
<dbReference type="STRING" id="4577.P55240"/>
<dbReference type="PaxDb" id="4577-GRMZM2G163437_P01"/>
<dbReference type="MaizeGDB" id="113182"/>
<dbReference type="eggNOG" id="KOG1322">
    <property type="taxonomic scope" value="Eukaryota"/>
</dbReference>
<dbReference type="InParanoid" id="P55240"/>
<dbReference type="UniPathway" id="UPA00152"/>
<dbReference type="Proteomes" id="UP000007305">
    <property type="component" value="Unplaced"/>
</dbReference>
<dbReference type="ExpressionAtlas" id="P55240">
    <property type="expression patterns" value="baseline and differential"/>
</dbReference>
<dbReference type="GO" id="GO:0009501">
    <property type="term" value="C:amyloplast"/>
    <property type="evidence" value="ECO:0007669"/>
    <property type="project" value="UniProtKB-SubCell"/>
</dbReference>
<dbReference type="GO" id="GO:0009507">
    <property type="term" value="C:chloroplast"/>
    <property type="evidence" value="ECO:0007669"/>
    <property type="project" value="UniProtKB-SubCell"/>
</dbReference>
<dbReference type="GO" id="GO:0005524">
    <property type="term" value="F:ATP binding"/>
    <property type="evidence" value="ECO:0007669"/>
    <property type="project" value="UniProtKB-KW"/>
</dbReference>
<dbReference type="GO" id="GO:0008878">
    <property type="term" value="F:glucose-1-phosphate adenylyltransferase activity"/>
    <property type="evidence" value="ECO:0007669"/>
    <property type="project" value="UniProtKB-EC"/>
</dbReference>
<dbReference type="GO" id="GO:0005978">
    <property type="term" value="P:glycogen biosynthetic process"/>
    <property type="evidence" value="ECO:0007669"/>
    <property type="project" value="InterPro"/>
</dbReference>
<dbReference type="GO" id="GO:0019252">
    <property type="term" value="P:starch biosynthetic process"/>
    <property type="evidence" value="ECO:0007669"/>
    <property type="project" value="UniProtKB-UniPathway"/>
</dbReference>
<dbReference type="CDD" id="cd04651">
    <property type="entry name" value="LbH_G1P_AT_C"/>
    <property type="match status" value="1"/>
</dbReference>
<dbReference type="FunFam" id="2.160.10.10:FF:000010">
    <property type="entry name" value="Glucose-1-phosphate adenylyltransferase"/>
    <property type="match status" value="1"/>
</dbReference>
<dbReference type="Gene3D" id="2.160.10.10">
    <property type="entry name" value="Hexapeptide repeat proteins"/>
    <property type="match status" value="1"/>
</dbReference>
<dbReference type="InterPro" id="IPR011831">
    <property type="entry name" value="ADP-Glc_PPase"/>
</dbReference>
<dbReference type="InterPro" id="IPR011004">
    <property type="entry name" value="Trimer_LpxA-like_sf"/>
</dbReference>
<dbReference type="PANTHER" id="PTHR43523:SF12">
    <property type="entry name" value="GLUCOSE-1-PHOSPHATE ADENYLYLTRANSFERASE LARGE SUBUNIT 1, CHLOROPLASTIC-RELATED"/>
    <property type="match status" value="1"/>
</dbReference>
<dbReference type="PANTHER" id="PTHR43523">
    <property type="entry name" value="GLUCOSE-1-PHOSPHATE ADENYLYLTRANSFERASE-RELATED"/>
    <property type="match status" value="1"/>
</dbReference>
<dbReference type="Pfam" id="PF25247">
    <property type="entry name" value="LbH_GLGC"/>
    <property type="match status" value="1"/>
</dbReference>
<dbReference type="SUPFAM" id="SSF51161">
    <property type="entry name" value="Trimeric LpxA-like enzymes"/>
    <property type="match status" value="1"/>
</dbReference>
<reference key="1">
    <citation type="journal article" date="1994" name="Plant Physiol.">
        <title>Expression of ADP-glucose pyrophosphorylase in maize (Zea mays L.) grain and source leaf during grain filling.</title>
        <authorList>
            <person name="Prioul J.-L."/>
            <person name="Jeannette E."/>
            <person name="Reyss A."/>
            <person name="Gregory N."/>
            <person name="Giroux M."/>
            <person name="Hannah L.C."/>
            <person name="Causse M."/>
        </authorList>
    </citation>
    <scope>NUCLEOTIDE SEQUENCE [MRNA]</scope>
    <source>
        <strain>cv. F7.F2</strain>
        <tissue>Leaf</tissue>
    </source>
</reference>
<evidence type="ECO:0000305" key="1"/>
<protein>
    <recommendedName>
        <fullName>Glucose-1-phosphate adenylyltransferase small subunit</fullName>
        <ecNumber>2.7.7.27</ecNumber>
    </recommendedName>
    <alternativeName>
        <fullName>ADP-glucose pyrophosphorylase</fullName>
    </alternativeName>
    <alternativeName>
        <fullName>ADP-glucose synthase</fullName>
    </alternativeName>
    <alternativeName>
        <fullName>AGPase B</fullName>
    </alternativeName>
    <alternativeName>
        <fullName>Alpha-D-glucose-1-phosphate adenyl transferase</fullName>
    </alternativeName>
</protein>
<comment type="function">
    <text>This protein plays a role in synthesis of starch. It catalyzes the synthesis of the activated glycosyl donor, ADP-glucose from Glc-1-P and ATP.</text>
</comment>
<comment type="catalytic activity">
    <reaction>
        <text>alpha-D-glucose 1-phosphate + ATP + H(+) = ADP-alpha-D-glucose + diphosphate</text>
        <dbReference type="Rhea" id="RHEA:12120"/>
        <dbReference type="ChEBI" id="CHEBI:15378"/>
        <dbReference type="ChEBI" id="CHEBI:30616"/>
        <dbReference type="ChEBI" id="CHEBI:33019"/>
        <dbReference type="ChEBI" id="CHEBI:57498"/>
        <dbReference type="ChEBI" id="CHEBI:58601"/>
        <dbReference type="EC" id="2.7.7.27"/>
    </reaction>
</comment>
<comment type="activity regulation">
    <text>Activated by 3'phosphoglycerate, inhibited by orthophosphate. Allosteric regulation.</text>
</comment>
<comment type="pathway">
    <text>Glycan biosynthesis; starch biosynthesis.</text>
</comment>
<comment type="subunit">
    <text>Heterotetramer.</text>
</comment>
<comment type="subcellular location">
    <subcellularLocation>
        <location>Plastid</location>
        <location>Chloroplast</location>
    </subcellularLocation>
    <subcellularLocation>
        <location>Plastid</location>
        <location>Amyloplast</location>
    </subcellularLocation>
    <text>Found in the chloroplast in leaf. Found in the plastid in the developing endosperm.</text>
</comment>
<comment type="tissue specificity">
    <text>Leaves.</text>
</comment>
<comment type="similarity">
    <text evidence="1">Belongs to the bacterial/plant glucose-1-phosphate adenylyltransferase family.</text>
</comment>
<name>GLGS_MAIZE</name>
<keyword id="KW-0021">Allosteric enzyme</keyword>
<keyword id="KW-0035">Amyloplast</keyword>
<keyword id="KW-0067">ATP-binding</keyword>
<keyword id="KW-0150">Chloroplast</keyword>
<keyword id="KW-0547">Nucleotide-binding</keyword>
<keyword id="KW-0548">Nucleotidyltransferase</keyword>
<keyword id="KW-0934">Plastid</keyword>
<keyword id="KW-1185">Reference proteome</keyword>
<keyword id="KW-0750">Starch biosynthesis</keyword>
<keyword id="KW-0808">Transferase</keyword>
<sequence>VTDSVIGEGCVIKNCKIHHSVVGLRSCISEGAIIEDTLLMGADYYAETEADKKLLAENGGIPIGIGKNSHIRKAIIDKNARIGDNVKILNADNVQEAARETDGYFIKGGIVTVIKDALLPSGTVI</sequence>